<name>RIMO_GEOSL</name>
<accession>Q747R0</accession>
<reference key="1">
    <citation type="journal article" date="2003" name="Science">
        <title>Genome of Geobacter sulfurreducens: metal reduction in subsurface environments.</title>
        <authorList>
            <person name="Methe B.A."/>
            <person name="Nelson K.E."/>
            <person name="Eisen J.A."/>
            <person name="Paulsen I.T."/>
            <person name="Nelson W.C."/>
            <person name="Heidelberg J.F."/>
            <person name="Wu D."/>
            <person name="Wu M."/>
            <person name="Ward N.L."/>
            <person name="Beanan M.J."/>
            <person name="Dodson R.J."/>
            <person name="Madupu R."/>
            <person name="Brinkac L.M."/>
            <person name="Daugherty S.C."/>
            <person name="DeBoy R.T."/>
            <person name="Durkin A.S."/>
            <person name="Gwinn M.L."/>
            <person name="Kolonay J.F."/>
            <person name="Sullivan S.A."/>
            <person name="Haft D.H."/>
            <person name="Selengut J."/>
            <person name="Davidsen T.M."/>
            <person name="Zafar N."/>
            <person name="White O."/>
            <person name="Tran B."/>
            <person name="Romero C."/>
            <person name="Forberger H.A."/>
            <person name="Weidman J.F."/>
            <person name="Khouri H.M."/>
            <person name="Feldblyum T.V."/>
            <person name="Utterback T.R."/>
            <person name="Van Aken S.E."/>
            <person name="Lovley D.R."/>
            <person name="Fraser C.M."/>
        </authorList>
    </citation>
    <scope>NUCLEOTIDE SEQUENCE [LARGE SCALE GENOMIC DNA]</scope>
    <source>
        <strain>ATCC 51573 / DSM 12127 / PCA</strain>
    </source>
</reference>
<comment type="function">
    <text evidence="1">Catalyzes the methylthiolation of an aspartic acid residue of ribosomal protein uS12.</text>
</comment>
<comment type="catalytic activity">
    <reaction evidence="1">
        <text>L-aspartate(89)-[ribosomal protein uS12]-hydrogen + (sulfur carrier)-SH + AH2 + 2 S-adenosyl-L-methionine = 3-methylsulfanyl-L-aspartate(89)-[ribosomal protein uS12]-hydrogen + (sulfur carrier)-H + 5'-deoxyadenosine + L-methionine + A + S-adenosyl-L-homocysteine + 2 H(+)</text>
        <dbReference type="Rhea" id="RHEA:37087"/>
        <dbReference type="Rhea" id="RHEA-COMP:10460"/>
        <dbReference type="Rhea" id="RHEA-COMP:10461"/>
        <dbReference type="Rhea" id="RHEA-COMP:14737"/>
        <dbReference type="Rhea" id="RHEA-COMP:14739"/>
        <dbReference type="ChEBI" id="CHEBI:13193"/>
        <dbReference type="ChEBI" id="CHEBI:15378"/>
        <dbReference type="ChEBI" id="CHEBI:17319"/>
        <dbReference type="ChEBI" id="CHEBI:17499"/>
        <dbReference type="ChEBI" id="CHEBI:29917"/>
        <dbReference type="ChEBI" id="CHEBI:29961"/>
        <dbReference type="ChEBI" id="CHEBI:57844"/>
        <dbReference type="ChEBI" id="CHEBI:57856"/>
        <dbReference type="ChEBI" id="CHEBI:59789"/>
        <dbReference type="ChEBI" id="CHEBI:64428"/>
        <dbReference type="ChEBI" id="CHEBI:73599"/>
        <dbReference type="EC" id="2.8.4.4"/>
    </reaction>
</comment>
<comment type="cofactor">
    <cofactor evidence="1">
        <name>[4Fe-4S] cluster</name>
        <dbReference type="ChEBI" id="CHEBI:49883"/>
    </cofactor>
    <text evidence="1">Binds 2 [4Fe-4S] clusters. One cluster is coordinated with 3 cysteines and an exchangeable S-adenosyl-L-methionine.</text>
</comment>
<comment type="subcellular location">
    <subcellularLocation>
        <location evidence="1">Cytoplasm</location>
    </subcellularLocation>
</comment>
<comment type="similarity">
    <text evidence="1">Belongs to the methylthiotransferase family. RimO subfamily.</text>
</comment>
<evidence type="ECO:0000255" key="1">
    <source>
        <dbReference type="HAMAP-Rule" id="MF_01865"/>
    </source>
</evidence>
<evidence type="ECO:0000255" key="2">
    <source>
        <dbReference type="PROSITE-ProRule" id="PRU01266"/>
    </source>
</evidence>
<sequence length="447" mass="50435">MSNAKEKVSMVSLGCPKNLVDAEVMLGRLAKDRYEITTDEREADIIIVNTCSFIKEAKQESIDTILDLADRKQDGRCRLLIVTGCLPQRYQEELARELPEVDIFVGTGDYPRIAEIIEEKSSRPEQLRYIGDPNFVFDESLTRLNSSPAYTAYLKIAEGCSNCCSYCVIPSLRGAFRSRPLESVLAEARSLVAGGAREINLIAQDITTYGRDLPGAPSLETLIRELAAIDGLAWIRLLYAYPDGITDGLIQTIKNEPKVCKYLDLPIQHISDPILKRMNRRSTEPQIRELVARLREEIPDIALRTSLIVGFPGETEEDFRTLLHFVEEAQFDRLGVFCYSREEGTPAAEMPDQVSERVKRERYKKLMKAQARVSFKRNRRLIDTEEQVIVEGYSEETELLLKGRSSRQAPDIDGQVYITAGNANVGDIVRLRITDSSDYDLIGEIIS</sequence>
<feature type="chain" id="PRO_0000374846" description="Ribosomal protein uS12 methylthiotransferase RimO">
    <location>
        <begin position="1"/>
        <end position="447"/>
    </location>
</feature>
<feature type="domain" description="MTTase N-terminal" evidence="1">
    <location>
        <begin position="6"/>
        <end position="122"/>
    </location>
</feature>
<feature type="domain" description="Radical SAM core" evidence="2">
    <location>
        <begin position="146"/>
        <end position="376"/>
    </location>
</feature>
<feature type="domain" description="TRAM" evidence="1">
    <location>
        <begin position="379"/>
        <end position="447"/>
    </location>
</feature>
<feature type="binding site" evidence="1">
    <location>
        <position position="15"/>
    </location>
    <ligand>
        <name>[4Fe-4S] cluster</name>
        <dbReference type="ChEBI" id="CHEBI:49883"/>
        <label>1</label>
    </ligand>
</feature>
<feature type="binding site" evidence="1">
    <location>
        <position position="51"/>
    </location>
    <ligand>
        <name>[4Fe-4S] cluster</name>
        <dbReference type="ChEBI" id="CHEBI:49883"/>
        <label>1</label>
    </ligand>
</feature>
<feature type="binding site" evidence="1">
    <location>
        <position position="85"/>
    </location>
    <ligand>
        <name>[4Fe-4S] cluster</name>
        <dbReference type="ChEBI" id="CHEBI:49883"/>
        <label>1</label>
    </ligand>
</feature>
<feature type="binding site" evidence="1">
    <location>
        <position position="160"/>
    </location>
    <ligand>
        <name>[4Fe-4S] cluster</name>
        <dbReference type="ChEBI" id="CHEBI:49883"/>
        <label>2</label>
        <note>4Fe-4S-S-AdoMet</note>
    </ligand>
</feature>
<feature type="binding site" evidence="1">
    <location>
        <position position="164"/>
    </location>
    <ligand>
        <name>[4Fe-4S] cluster</name>
        <dbReference type="ChEBI" id="CHEBI:49883"/>
        <label>2</label>
        <note>4Fe-4S-S-AdoMet</note>
    </ligand>
</feature>
<feature type="binding site" evidence="1">
    <location>
        <position position="167"/>
    </location>
    <ligand>
        <name>[4Fe-4S] cluster</name>
        <dbReference type="ChEBI" id="CHEBI:49883"/>
        <label>2</label>
        <note>4Fe-4S-S-AdoMet</note>
    </ligand>
</feature>
<gene>
    <name evidence="1" type="primary">rimO</name>
    <name type="ordered locus">GSU3205</name>
</gene>
<organism>
    <name type="scientific">Geobacter sulfurreducens (strain ATCC 51573 / DSM 12127 / PCA)</name>
    <dbReference type="NCBI Taxonomy" id="243231"/>
    <lineage>
        <taxon>Bacteria</taxon>
        <taxon>Pseudomonadati</taxon>
        <taxon>Thermodesulfobacteriota</taxon>
        <taxon>Desulfuromonadia</taxon>
        <taxon>Geobacterales</taxon>
        <taxon>Geobacteraceae</taxon>
        <taxon>Geobacter</taxon>
    </lineage>
</organism>
<keyword id="KW-0004">4Fe-4S</keyword>
<keyword id="KW-0963">Cytoplasm</keyword>
<keyword id="KW-0408">Iron</keyword>
<keyword id="KW-0411">Iron-sulfur</keyword>
<keyword id="KW-0479">Metal-binding</keyword>
<keyword id="KW-1185">Reference proteome</keyword>
<keyword id="KW-0949">S-adenosyl-L-methionine</keyword>
<keyword id="KW-0808">Transferase</keyword>
<dbReference type="EC" id="2.8.4.4" evidence="1"/>
<dbReference type="EMBL" id="AE017180">
    <property type="protein sequence ID" value="AAR36596.1"/>
    <property type="molecule type" value="Genomic_DNA"/>
</dbReference>
<dbReference type="RefSeq" id="NP_954246.1">
    <property type="nucleotide sequence ID" value="NC_002939.5"/>
</dbReference>
<dbReference type="RefSeq" id="WP_010943823.1">
    <property type="nucleotide sequence ID" value="NC_002939.5"/>
</dbReference>
<dbReference type="SMR" id="Q747R0"/>
<dbReference type="FunCoup" id="Q747R0">
    <property type="interactions" value="393"/>
</dbReference>
<dbReference type="STRING" id="243231.GSU3205"/>
<dbReference type="EnsemblBacteria" id="AAR36596">
    <property type="protein sequence ID" value="AAR36596"/>
    <property type="gene ID" value="GSU3205"/>
</dbReference>
<dbReference type="KEGG" id="gsu:GSU3205"/>
<dbReference type="PATRIC" id="fig|243231.5.peg.3229"/>
<dbReference type="eggNOG" id="COG0621">
    <property type="taxonomic scope" value="Bacteria"/>
</dbReference>
<dbReference type="HOGENOM" id="CLU_018697_0_1_7"/>
<dbReference type="InParanoid" id="Q747R0"/>
<dbReference type="OrthoDB" id="9805215at2"/>
<dbReference type="Proteomes" id="UP000000577">
    <property type="component" value="Chromosome"/>
</dbReference>
<dbReference type="GO" id="GO:0005829">
    <property type="term" value="C:cytosol"/>
    <property type="evidence" value="ECO:0000318"/>
    <property type="project" value="GO_Central"/>
</dbReference>
<dbReference type="GO" id="GO:0051539">
    <property type="term" value="F:4 iron, 4 sulfur cluster binding"/>
    <property type="evidence" value="ECO:0000318"/>
    <property type="project" value="GO_Central"/>
</dbReference>
<dbReference type="GO" id="GO:0035599">
    <property type="term" value="F:aspartic acid methylthiotransferase activity"/>
    <property type="evidence" value="ECO:0000318"/>
    <property type="project" value="GO_Central"/>
</dbReference>
<dbReference type="GO" id="GO:0046872">
    <property type="term" value="F:metal ion binding"/>
    <property type="evidence" value="ECO:0007669"/>
    <property type="project" value="UniProtKB-KW"/>
</dbReference>
<dbReference type="GO" id="GO:0103039">
    <property type="term" value="F:protein methylthiotransferase activity"/>
    <property type="evidence" value="ECO:0007669"/>
    <property type="project" value="UniProtKB-EC"/>
</dbReference>
<dbReference type="GO" id="GO:0006400">
    <property type="term" value="P:tRNA modification"/>
    <property type="evidence" value="ECO:0007669"/>
    <property type="project" value="InterPro"/>
</dbReference>
<dbReference type="CDD" id="cd01335">
    <property type="entry name" value="Radical_SAM"/>
    <property type="match status" value="1"/>
</dbReference>
<dbReference type="FunFam" id="3.40.50.12160:FF:000002">
    <property type="entry name" value="Ribosomal protein S12 methylthiotransferase RimO"/>
    <property type="match status" value="1"/>
</dbReference>
<dbReference type="FunFam" id="3.80.30.20:FF:000001">
    <property type="entry name" value="tRNA-2-methylthio-N(6)-dimethylallyladenosine synthase 2"/>
    <property type="match status" value="1"/>
</dbReference>
<dbReference type="Gene3D" id="3.40.50.12160">
    <property type="entry name" value="Methylthiotransferase, N-terminal domain"/>
    <property type="match status" value="1"/>
</dbReference>
<dbReference type="Gene3D" id="2.40.50.140">
    <property type="entry name" value="Nucleic acid-binding proteins"/>
    <property type="match status" value="1"/>
</dbReference>
<dbReference type="Gene3D" id="3.80.30.20">
    <property type="entry name" value="tm_1862 like domain"/>
    <property type="match status" value="1"/>
</dbReference>
<dbReference type="HAMAP" id="MF_01865">
    <property type="entry name" value="MTTase_RimO"/>
    <property type="match status" value="1"/>
</dbReference>
<dbReference type="InterPro" id="IPR006638">
    <property type="entry name" value="Elp3/MiaA/NifB-like_rSAM"/>
</dbReference>
<dbReference type="InterPro" id="IPR005839">
    <property type="entry name" value="Methylthiotransferase"/>
</dbReference>
<dbReference type="InterPro" id="IPR020612">
    <property type="entry name" value="Methylthiotransferase_CS"/>
</dbReference>
<dbReference type="InterPro" id="IPR013848">
    <property type="entry name" value="Methylthiotransferase_N"/>
</dbReference>
<dbReference type="InterPro" id="IPR038135">
    <property type="entry name" value="Methylthiotransferase_N_sf"/>
</dbReference>
<dbReference type="InterPro" id="IPR012340">
    <property type="entry name" value="NA-bd_OB-fold"/>
</dbReference>
<dbReference type="InterPro" id="IPR005840">
    <property type="entry name" value="Ribosomal_uS12_MeSTrfase_RimO"/>
</dbReference>
<dbReference type="InterPro" id="IPR007197">
    <property type="entry name" value="rSAM"/>
</dbReference>
<dbReference type="InterPro" id="IPR023404">
    <property type="entry name" value="rSAM_horseshoe"/>
</dbReference>
<dbReference type="InterPro" id="IPR002792">
    <property type="entry name" value="TRAM_dom"/>
</dbReference>
<dbReference type="NCBIfam" id="TIGR01125">
    <property type="entry name" value="30S ribosomal protein S12 methylthiotransferase RimO"/>
    <property type="match status" value="1"/>
</dbReference>
<dbReference type="NCBIfam" id="TIGR00089">
    <property type="entry name" value="MiaB/RimO family radical SAM methylthiotransferase"/>
    <property type="match status" value="1"/>
</dbReference>
<dbReference type="PANTHER" id="PTHR43837">
    <property type="entry name" value="RIBOSOMAL PROTEIN S12 METHYLTHIOTRANSFERASE RIMO"/>
    <property type="match status" value="1"/>
</dbReference>
<dbReference type="PANTHER" id="PTHR43837:SF1">
    <property type="entry name" value="RIBOSOMAL PROTEIN US12 METHYLTHIOTRANSFERASE RIMO"/>
    <property type="match status" value="1"/>
</dbReference>
<dbReference type="Pfam" id="PF04055">
    <property type="entry name" value="Radical_SAM"/>
    <property type="match status" value="1"/>
</dbReference>
<dbReference type="Pfam" id="PF18693">
    <property type="entry name" value="TRAM_2"/>
    <property type="match status" value="1"/>
</dbReference>
<dbReference type="Pfam" id="PF00919">
    <property type="entry name" value="UPF0004"/>
    <property type="match status" value="1"/>
</dbReference>
<dbReference type="SFLD" id="SFLDG01082">
    <property type="entry name" value="B12-binding_domain_containing"/>
    <property type="match status" value="1"/>
</dbReference>
<dbReference type="SFLD" id="SFLDS00029">
    <property type="entry name" value="Radical_SAM"/>
    <property type="match status" value="1"/>
</dbReference>
<dbReference type="SFLD" id="SFLDF00274">
    <property type="entry name" value="ribosomal_protein_S12_methylth"/>
    <property type="match status" value="1"/>
</dbReference>
<dbReference type="SMART" id="SM00729">
    <property type="entry name" value="Elp3"/>
    <property type="match status" value="1"/>
</dbReference>
<dbReference type="SUPFAM" id="SSF102114">
    <property type="entry name" value="Radical SAM enzymes"/>
    <property type="match status" value="1"/>
</dbReference>
<dbReference type="PROSITE" id="PS51449">
    <property type="entry name" value="MTTASE_N"/>
    <property type="match status" value="1"/>
</dbReference>
<dbReference type="PROSITE" id="PS01278">
    <property type="entry name" value="MTTASE_RADICAL"/>
    <property type="match status" value="1"/>
</dbReference>
<dbReference type="PROSITE" id="PS51918">
    <property type="entry name" value="RADICAL_SAM"/>
    <property type="match status" value="1"/>
</dbReference>
<dbReference type="PROSITE" id="PS50926">
    <property type="entry name" value="TRAM"/>
    <property type="match status" value="1"/>
</dbReference>
<protein>
    <recommendedName>
        <fullName evidence="1">Ribosomal protein uS12 methylthiotransferase RimO</fullName>
        <shortName evidence="1">uS12 MTTase</shortName>
        <shortName evidence="1">uS12 methylthiotransferase</shortName>
        <ecNumber evidence="1">2.8.4.4</ecNumber>
    </recommendedName>
    <alternativeName>
        <fullName evidence="1">Ribosomal protein uS12 (aspartate-C(3))-methylthiotransferase</fullName>
    </alternativeName>
    <alternativeName>
        <fullName evidence="1">Ribosome maturation factor RimO</fullName>
    </alternativeName>
</protein>
<proteinExistence type="inferred from homology"/>